<evidence type="ECO:0000250" key="1">
    <source>
        <dbReference type="UniProtKB" id="P05719"/>
    </source>
</evidence>
<evidence type="ECO:0000269" key="2">
    <source>
    </source>
</evidence>
<evidence type="ECO:0000303" key="3">
    <source>
    </source>
</evidence>
<evidence type="ECO:0000303" key="4">
    <source>
    </source>
</evidence>
<evidence type="ECO:0000305" key="5"/>
<evidence type="ECO:0000305" key="6">
    <source>
    </source>
</evidence>
<evidence type="ECO:0000305" key="7">
    <source>
    </source>
</evidence>
<comment type="function">
    <text evidence="1 2 3 6 7">The specificity (S) subunit of a type I restriction enzyme; this subunit dictates DNA sequence specificity. The M and S subunits together form a methyltransferase (MTase) that methylates adenosines in the sequence 5'-RAACN(5)TAG-3'. Methylation protects against cleavage by HindI (Probable) (PubMed:4591672). In the presence of the R subunit the complex can also act as an endonuclease, binding to the same target sequence but cutting the DNA some distance from this site. Whether the DNA is cut or modified depends on the methylation state of the target sequence. When the target site is unmodified, the DNA is cut. When the target site is hemimethylated, the complex acts as a maintenance MTase modifying the DNA so that both strands become methylated (Probable) (PubMed:12654995). After locating a non-methylated recognition site, the enzyme complex serves as a molecular motor that translocates DNA in an ATP-dependent manner until a collision occurs that triggers cleavage (By similarity).</text>
</comment>
<comment type="subunit">
    <text evidence="1 6 7">The type I restriction/modification system is composed of three polypeptides R, M and S; the restriction enzyme has stoichiometry R(2)M(2)S(1) while the methyltransferase is M(2)S(1).</text>
</comment>
<comment type="domain">
    <text evidence="1">Contains two DNA recognition domains, each specifying recognition of one of the two defined components of the target sequence.</text>
</comment>
<comment type="miscellaneous">
    <text evidence="1">Type I restriction and modification enzymes are complex, multifunctional systems which require ATP, S-adenosyl methionine and Mg(2+) as cofactors and, in addition to their endonucleolytic and methylase activities, are potent DNA-dependent ATPases.</text>
</comment>
<comment type="similarity">
    <text evidence="5">Belongs to the type-I restriction system S methylase family.</text>
</comment>
<dbReference type="EMBL" id="L42023">
    <property type="protein sequence ID" value="AAC22935.1"/>
    <property type="molecule type" value="Genomic_DNA"/>
</dbReference>
<dbReference type="PIR" id="H64024">
    <property type="entry name" value="H64024"/>
</dbReference>
<dbReference type="RefSeq" id="NP_439438.1">
    <property type="nucleotide sequence ID" value="NC_000907.1"/>
</dbReference>
<dbReference type="SMR" id="P44152"/>
<dbReference type="STRING" id="71421.HI_1286"/>
<dbReference type="REBASE" id="155514">
    <property type="entry name" value="S.VscVS05ORF3158P"/>
</dbReference>
<dbReference type="REBASE" id="191854">
    <property type="entry name" value="S2.Apa1447ORF2799P"/>
</dbReference>
<dbReference type="REBASE" id="191858">
    <property type="entry name" value="S2.Apa1447ORF3031P"/>
</dbReference>
<dbReference type="REBASE" id="191870">
    <property type="entry name" value="S2.Apa1342ORF2943P"/>
</dbReference>
<dbReference type="REBASE" id="191873">
    <property type="entry name" value="S1.Apa1342ORF3157P"/>
</dbReference>
<dbReference type="REBASE" id="203816">
    <property type="entry name" value="S.Lbr1106ORF30P"/>
</dbReference>
<dbReference type="REBASE" id="231751">
    <property type="entry name" value="S.Sen4839ORF3820P"/>
</dbReference>
<dbReference type="REBASE" id="5608">
    <property type="entry name" value="S.HindI"/>
</dbReference>
<dbReference type="EnsemblBacteria" id="AAC22935">
    <property type="protein sequence ID" value="AAC22935"/>
    <property type="gene ID" value="HI_1286"/>
</dbReference>
<dbReference type="KEGG" id="hin:HI_1286"/>
<dbReference type="PATRIC" id="fig|71421.8.peg.1338"/>
<dbReference type="eggNOG" id="COG0732">
    <property type="taxonomic scope" value="Bacteria"/>
</dbReference>
<dbReference type="HOGENOM" id="CLU_021095_2_1_6"/>
<dbReference type="OrthoDB" id="9798929at2"/>
<dbReference type="PhylomeDB" id="P44152"/>
<dbReference type="BioCyc" id="HINF71421:G1GJ1-1312-MONOMER"/>
<dbReference type="PRO" id="PR:P44152"/>
<dbReference type="Proteomes" id="UP000000579">
    <property type="component" value="Chromosome"/>
</dbReference>
<dbReference type="GO" id="GO:0003677">
    <property type="term" value="F:DNA binding"/>
    <property type="evidence" value="ECO:0007669"/>
    <property type="project" value="UniProtKB-KW"/>
</dbReference>
<dbReference type="GO" id="GO:0009307">
    <property type="term" value="P:DNA restriction-modification system"/>
    <property type="evidence" value="ECO:0007669"/>
    <property type="project" value="UniProtKB-KW"/>
</dbReference>
<dbReference type="CDD" id="cd17251">
    <property type="entry name" value="RMtype1_S_HinAWORF1578P-TRD2-CR2_like"/>
    <property type="match status" value="1"/>
</dbReference>
<dbReference type="CDD" id="cd16961">
    <property type="entry name" value="RMtype1_S_TRD-CR_like"/>
    <property type="match status" value="1"/>
</dbReference>
<dbReference type="Gene3D" id="3.90.220.20">
    <property type="entry name" value="DNA methylase specificity domains"/>
    <property type="match status" value="2"/>
</dbReference>
<dbReference type="InterPro" id="IPR000055">
    <property type="entry name" value="Restrct_endonuc_typeI_TRD"/>
</dbReference>
<dbReference type="InterPro" id="IPR044946">
    <property type="entry name" value="Restrct_endonuc_typeI_TRD_sf"/>
</dbReference>
<dbReference type="InterPro" id="IPR052021">
    <property type="entry name" value="Type-I_RS_S_subunit"/>
</dbReference>
<dbReference type="PANTHER" id="PTHR30408:SF13">
    <property type="entry name" value="TYPE I RESTRICTION ENZYME HINDI SPECIFICITY SUBUNIT"/>
    <property type="match status" value="1"/>
</dbReference>
<dbReference type="PANTHER" id="PTHR30408">
    <property type="entry name" value="TYPE-1 RESTRICTION ENZYME ECOKI SPECIFICITY PROTEIN"/>
    <property type="match status" value="1"/>
</dbReference>
<dbReference type="Pfam" id="PF01420">
    <property type="entry name" value="Methylase_S"/>
    <property type="match status" value="2"/>
</dbReference>
<dbReference type="SUPFAM" id="SSF116734">
    <property type="entry name" value="DNA methylase specificity domain"/>
    <property type="match status" value="2"/>
</dbReference>
<protein>
    <recommendedName>
        <fullName evidence="5">Type I restriction enzyme HindI specificity subunit</fullName>
        <shortName>S protein</shortName>
    </recommendedName>
    <alternativeName>
        <fullName evidence="3">Type I specificity subunit S.HindI</fullName>
        <shortName evidence="3">S.HindI</shortName>
    </alternativeName>
    <alternativeName>
        <fullName>Type-1 restriction enzyme HindVIIP specificity subunit</fullName>
    </alternativeName>
</protein>
<proteinExistence type="evidence at protein level"/>
<feature type="chain" id="PRO_0000198040" description="Type I restriction enzyme HindI specificity subunit">
    <location>
        <begin position="1"/>
        <end position="459"/>
    </location>
</feature>
<reference key="1">
    <citation type="journal article" date="1995" name="Science">
        <title>Whole-genome random sequencing and assembly of Haemophilus influenzae Rd.</title>
        <authorList>
            <person name="Fleischmann R.D."/>
            <person name="Adams M.D."/>
            <person name="White O."/>
            <person name="Clayton R.A."/>
            <person name="Kirkness E.F."/>
            <person name="Kerlavage A.R."/>
            <person name="Bult C.J."/>
            <person name="Tomb J.-F."/>
            <person name="Dougherty B.A."/>
            <person name="Merrick J.M."/>
            <person name="McKenney K."/>
            <person name="Sutton G.G."/>
            <person name="FitzHugh W."/>
            <person name="Fields C.A."/>
            <person name="Gocayne J.D."/>
            <person name="Scott J.D."/>
            <person name="Shirley R."/>
            <person name="Liu L.-I."/>
            <person name="Glodek A."/>
            <person name="Kelley J.M."/>
            <person name="Weidman J.F."/>
            <person name="Phillips C.A."/>
            <person name="Spriggs T."/>
            <person name="Hedblom E."/>
            <person name="Cotton M.D."/>
            <person name="Utterback T.R."/>
            <person name="Hanna M.C."/>
            <person name="Nguyen D.T."/>
            <person name="Saudek D.M."/>
            <person name="Brandon R.C."/>
            <person name="Fine L.D."/>
            <person name="Fritchman J.L."/>
            <person name="Fuhrmann J.L."/>
            <person name="Geoghagen N.S.M."/>
            <person name="Gnehm C.L."/>
            <person name="McDonald L.A."/>
            <person name="Small K.V."/>
            <person name="Fraser C.M."/>
            <person name="Smith H.O."/>
            <person name="Venter J.C."/>
        </authorList>
    </citation>
    <scope>NUCLEOTIDE SEQUENCE [LARGE SCALE GENOMIC DNA]</scope>
    <source>
        <strain>ATCC 51907 / DSM 11121 / KW20 / Rd</strain>
    </source>
</reference>
<reference key="2">
    <citation type="journal article" date="1973" name="J. Mol. Biol.">
        <title>DNA methylases of Hemophilus influenzae Rd. I. Purification and properties.</title>
        <authorList>
            <person name="Roy P.H."/>
            <person name="Smith H.O."/>
        </authorList>
    </citation>
    <scope>FUNCTION AS A METHYLASE</scope>
    <source>
        <strain>ATCC 51907 / DSM 11121 / KW20 / Rd</strain>
    </source>
</reference>
<reference key="3">
    <citation type="journal article" date="1973" name="J. Mol. Biol.">
        <title>DNA methylases of Hemophilus influenzae Rd. II. Partial recognition site base sequences.</title>
        <authorList>
            <person name="Roy P.H."/>
            <person name="Smith H.O."/>
        </authorList>
    </citation>
    <scope>PARTIAL RECOGNITION SEQUENCE</scope>
    <source>
        <strain>ATCC 51907 / DSM 11121 / KW20 / Rd</strain>
    </source>
</reference>
<reference key="4">
    <citation type="journal article" date="2003" name="Nucleic Acids Res.">
        <title>A nomenclature for restriction enzymes, DNA methyltransferases, homing endonucleases and their genes.</title>
        <authorList>
            <person name="Roberts R.J."/>
            <person name="Belfort M."/>
            <person name="Bestor T."/>
            <person name="Bhagwat A.S."/>
            <person name="Bickle T.A."/>
            <person name="Bitinaite J."/>
            <person name="Blumenthal R.M."/>
            <person name="Degtyarev S.K."/>
            <person name="Dryden D.T."/>
            <person name="Dybvig K."/>
            <person name="Firman K."/>
            <person name="Gromova E.S."/>
            <person name="Gumport R.I."/>
            <person name="Halford S.E."/>
            <person name="Hattman S."/>
            <person name="Heitman J."/>
            <person name="Hornby D.P."/>
            <person name="Janulaitis A."/>
            <person name="Jeltsch A."/>
            <person name="Josephsen J."/>
            <person name="Kiss A."/>
            <person name="Klaenhammer T.R."/>
            <person name="Kobayashi I."/>
            <person name="Kong H."/>
            <person name="Krueger D.H."/>
            <person name="Lacks S."/>
            <person name="Marinus M.G."/>
            <person name="Miyahara M."/>
            <person name="Morgan R.D."/>
            <person name="Murray N.E."/>
            <person name="Nagaraja V."/>
            <person name="Piekarowicz A."/>
            <person name="Pingoud A."/>
            <person name="Raleigh E."/>
            <person name="Rao D.N."/>
            <person name="Reich N."/>
            <person name="Repin V.E."/>
            <person name="Selker E.U."/>
            <person name="Shaw P.C."/>
            <person name="Stein D.C."/>
            <person name="Stoddard B.L."/>
            <person name="Szybalski W."/>
            <person name="Trautner T.A."/>
            <person name="Van Etten J.L."/>
            <person name="Vitor J.M."/>
            <person name="Wilson G.G."/>
            <person name="Xu S.Y."/>
        </authorList>
    </citation>
    <scope>NOMENCLATURE</scope>
</reference>
<sequence>MSDWKEYSLGDISRNISRRFDFNAYPNVVFINTGDVLNNKFLHCEISNVKDLPGQAKKAIKKGDILYSEIRPGNGRYLFVDNDLDNYVVSTKFMVIEPNANIVLPEFLFLLLISNETTEYFKMIAESRSGTFPQITFDSVSSLSLNIPDKETQQKILDIITPLDDKIELNTQINQTLEQIAQALFKSWFVDFDPVRAKAQALSDGMSLEQAELAAMQAISGKTPEELTALSQTQPDRYAELAETAKAFPCEMVEVDGVEVDGVEVPRGWEMKALSDLGQIICGKTPSKSNKEFYGDDVPFIKIPDMHNQVFITQTTDNLSVVGANYQSKKYIPAKSICVSCIATVGLVSMTSKPSHTNQQINSIIPDDEQSCEFLYLSLKQPSMTKYLKDLASGGTATLNLNTSTFSKIEIITPSKEIIYIFQKKVVSIFEKTLSNSIENKRLTEIRDLLLPRLLNGEI</sequence>
<organism>
    <name type="scientific">Haemophilus influenzae (strain ATCC 51907 / DSM 11121 / KW20 / Rd)</name>
    <dbReference type="NCBI Taxonomy" id="71421"/>
    <lineage>
        <taxon>Bacteria</taxon>
        <taxon>Pseudomonadati</taxon>
        <taxon>Pseudomonadota</taxon>
        <taxon>Gammaproteobacteria</taxon>
        <taxon>Pasteurellales</taxon>
        <taxon>Pasteurellaceae</taxon>
        <taxon>Haemophilus</taxon>
    </lineage>
</organism>
<keyword id="KW-0238">DNA-binding</keyword>
<keyword id="KW-1185">Reference proteome</keyword>
<keyword id="KW-0677">Repeat</keyword>
<keyword id="KW-0680">Restriction system</keyword>
<name>T1SH_HAEIN</name>
<accession>P44152</accession>
<gene>
    <name evidence="4" type="primary">hsdS</name>
    <name type="ordered locus">HI_1286</name>
</gene>